<reference key="1">
    <citation type="journal article" date="2006" name="Theor. Appl. Genet.">
        <title>Complete chloroplast genome sequences of Solanum bulbocastanum, Solanum lycopersicum and comparative analyses with other Solanaceae genomes.</title>
        <authorList>
            <person name="Daniell H."/>
            <person name="Lee S.-B."/>
            <person name="Grevich J."/>
            <person name="Saski C."/>
            <person name="Quesada-Vargas T."/>
            <person name="Guda C."/>
            <person name="Tomkins J."/>
            <person name="Jansen R.K."/>
        </authorList>
    </citation>
    <scope>NUCLEOTIDE SEQUENCE [LARGE SCALE GENOMIC DNA]</scope>
    <source>
        <strain>cv. PT29</strain>
    </source>
</reference>
<proteinExistence type="inferred from homology"/>
<gene>
    <name type="primary">ndhF</name>
</gene>
<dbReference type="EC" id="7.1.1.-"/>
<dbReference type="EMBL" id="DQ347958">
    <property type="protein sequence ID" value="ABC56261.1"/>
    <property type="molecule type" value="Genomic_DNA"/>
</dbReference>
<dbReference type="RefSeq" id="YP_538897.1">
    <property type="nucleotide sequence ID" value="NC_007943.1"/>
</dbReference>
<dbReference type="SMR" id="Q2MIE0"/>
<dbReference type="GeneID" id="3989485"/>
<dbReference type="GO" id="GO:0009535">
    <property type="term" value="C:chloroplast thylakoid membrane"/>
    <property type="evidence" value="ECO:0007669"/>
    <property type="project" value="UniProtKB-SubCell"/>
</dbReference>
<dbReference type="GO" id="GO:0008137">
    <property type="term" value="F:NADH dehydrogenase (ubiquinone) activity"/>
    <property type="evidence" value="ECO:0007669"/>
    <property type="project" value="InterPro"/>
</dbReference>
<dbReference type="GO" id="GO:0048038">
    <property type="term" value="F:quinone binding"/>
    <property type="evidence" value="ECO:0007669"/>
    <property type="project" value="UniProtKB-KW"/>
</dbReference>
<dbReference type="GO" id="GO:0042773">
    <property type="term" value="P:ATP synthesis coupled electron transport"/>
    <property type="evidence" value="ECO:0007669"/>
    <property type="project" value="InterPro"/>
</dbReference>
<dbReference type="GO" id="GO:0015990">
    <property type="term" value="P:electron transport coupled proton transport"/>
    <property type="evidence" value="ECO:0007669"/>
    <property type="project" value="TreeGrafter"/>
</dbReference>
<dbReference type="Gene3D" id="1.20.5.2700">
    <property type="match status" value="1"/>
</dbReference>
<dbReference type="InterPro" id="IPR002128">
    <property type="entry name" value="NADH_UbQ_OxRdtase_chlpt_su5_C"/>
</dbReference>
<dbReference type="InterPro" id="IPR018393">
    <property type="entry name" value="NADHpl_OxRdtase_5_subgr"/>
</dbReference>
<dbReference type="InterPro" id="IPR001750">
    <property type="entry name" value="ND/Mrp_TM"/>
</dbReference>
<dbReference type="InterPro" id="IPR003945">
    <property type="entry name" value="NU5C-like"/>
</dbReference>
<dbReference type="InterPro" id="IPR001516">
    <property type="entry name" value="Proton_antipo_N"/>
</dbReference>
<dbReference type="NCBIfam" id="TIGR01974">
    <property type="entry name" value="NDH_I_L"/>
    <property type="match status" value="1"/>
</dbReference>
<dbReference type="NCBIfam" id="NF005141">
    <property type="entry name" value="PRK06590.1"/>
    <property type="match status" value="1"/>
</dbReference>
<dbReference type="PANTHER" id="PTHR42829">
    <property type="entry name" value="NADH-UBIQUINONE OXIDOREDUCTASE CHAIN 5"/>
    <property type="match status" value="1"/>
</dbReference>
<dbReference type="PANTHER" id="PTHR42829:SF2">
    <property type="entry name" value="NADH-UBIQUINONE OXIDOREDUCTASE CHAIN 5"/>
    <property type="match status" value="1"/>
</dbReference>
<dbReference type="Pfam" id="PF01010">
    <property type="entry name" value="Proton_antipo_C"/>
    <property type="match status" value="1"/>
</dbReference>
<dbReference type="Pfam" id="PF00361">
    <property type="entry name" value="Proton_antipo_M"/>
    <property type="match status" value="1"/>
</dbReference>
<dbReference type="Pfam" id="PF00662">
    <property type="entry name" value="Proton_antipo_N"/>
    <property type="match status" value="1"/>
</dbReference>
<dbReference type="PRINTS" id="PR01434">
    <property type="entry name" value="NADHDHGNASE5"/>
</dbReference>
<dbReference type="PRINTS" id="PR01435">
    <property type="entry name" value="NPOXDRDTASE5"/>
</dbReference>
<protein>
    <recommendedName>
        <fullName>NAD(P)H-quinone oxidoreductase subunit 5, chloroplastic</fullName>
        <ecNumber>7.1.1.-</ecNumber>
    </recommendedName>
    <alternativeName>
        <fullName>NAD(P)H dehydrogenase subunit 5</fullName>
    </alternativeName>
    <alternativeName>
        <fullName>NADH-plastoquinone oxidoreductase subunit 5</fullName>
    </alternativeName>
</protein>
<evidence type="ECO:0000250" key="1"/>
<evidence type="ECO:0000255" key="2"/>
<evidence type="ECO:0000305" key="3"/>
<keyword id="KW-0150">Chloroplast</keyword>
<keyword id="KW-0472">Membrane</keyword>
<keyword id="KW-0520">NAD</keyword>
<keyword id="KW-0521">NADP</keyword>
<keyword id="KW-0934">Plastid</keyword>
<keyword id="KW-0618">Plastoquinone</keyword>
<keyword id="KW-0874">Quinone</keyword>
<keyword id="KW-0793">Thylakoid</keyword>
<keyword id="KW-1278">Translocase</keyword>
<keyword id="KW-0812">Transmembrane</keyword>
<keyword id="KW-1133">Transmembrane helix</keyword>
<keyword id="KW-0813">Transport</keyword>
<geneLocation type="chloroplast"/>
<comment type="function">
    <text evidence="1">NDH shuttles electrons from NAD(P)H:plastoquinone, via FMN and iron-sulfur (Fe-S) centers, to quinones in the photosynthetic chain and possibly in a chloroplast respiratory chain. The immediate electron acceptor for the enzyme in this species is believed to be plastoquinone. Couples the redox reaction to proton translocation, and thus conserves the redox energy in a proton gradient (By similarity).</text>
</comment>
<comment type="catalytic activity">
    <reaction>
        <text>a plastoquinone + NADH + (n+1) H(+)(in) = a plastoquinol + NAD(+) + n H(+)(out)</text>
        <dbReference type="Rhea" id="RHEA:42608"/>
        <dbReference type="Rhea" id="RHEA-COMP:9561"/>
        <dbReference type="Rhea" id="RHEA-COMP:9562"/>
        <dbReference type="ChEBI" id="CHEBI:15378"/>
        <dbReference type="ChEBI" id="CHEBI:17757"/>
        <dbReference type="ChEBI" id="CHEBI:57540"/>
        <dbReference type="ChEBI" id="CHEBI:57945"/>
        <dbReference type="ChEBI" id="CHEBI:62192"/>
    </reaction>
</comment>
<comment type="catalytic activity">
    <reaction>
        <text>a plastoquinone + NADPH + (n+1) H(+)(in) = a plastoquinol + NADP(+) + n H(+)(out)</text>
        <dbReference type="Rhea" id="RHEA:42612"/>
        <dbReference type="Rhea" id="RHEA-COMP:9561"/>
        <dbReference type="Rhea" id="RHEA-COMP:9562"/>
        <dbReference type="ChEBI" id="CHEBI:15378"/>
        <dbReference type="ChEBI" id="CHEBI:17757"/>
        <dbReference type="ChEBI" id="CHEBI:57783"/>
        <dbReference type="ChEBI" id="CHEBI:58349"/>
        <dbReference type="ChEBI" id="CHEBI:62192"/>
    </reaction>
</comment>
<comment type="subunit">
    <text evidence="1">NDH is composed of at least 16 different subunits, 5 of which are encoded in the nucleus.</text>
</comment>
<comment type="subcellular location">
    <subcellularLocation>
        <location evidence="1">Plastid</location>
        <location evidence="1">Chloroplast thylakoid membrane</location>
        <topology evidence="1">Multi-pass membrane protein</topology>
    </subcellularLocation>
</comment>
<comment type="similarity">
    <text evidence="3">Belongs to the complex I subunit 5 family.</text>
</comment>
<feature type="chain" id="PRO_0000360972" description="NAD(P)H-quinone oxidoreductase subunit 5, chloroplastic">
    <location>
        <begin position="1"/>
        <end position="740"/>
    </location>
</feature>
<feature type="transmembrane region" description="Helical" evidence="2">
    <location>
        <begin position="9"/>
        <end position="29"/>
    </location>
</feature>
<feature type="transmembrane region" description="Helical" evidence="2">
    <location>
        <begin position="40"/>
        <end position="60"/>
    </location>
</feature>
<feature type="transmembrane region" description="Helical" evidence="2">
    <location>
        <begin position="89"/>
        <end position="109"/>
    </location>
</feature>
<feature type="transmembrane region" description="Helical" evidence="2">
    <location>
        <begin position="125"/>
        <end position="145"/>
    </location>
</feature>
<feature type="transmembrane region" description="Helical" evidence="2">
    <location>
        <begin position="147"/>
        <end position="167"/>
    </location>
</feature>
<feature type="transmembrane region" description="Helical" evidence="2">
    <location>
        <begin position="185"/>
        <end position="205"/>
    </location>
</feature>
<feature type="transmembrane region" description="Helical" evidence="2">
    <location>
        <begin position="219"/>
        <end position="239"/>
    </location>
</feature>
<feature type="transmembrane region" description="Helical" evidence="2">
    <location>
        <begin position="258"/>
        <end position="278"/>
    </location>
</feature>
<feature type="transmembrane region" description="Helical" evidence="2">
    <location>
        <begin position="286"/>
        <end position="306"/>
    </location>
</feature>
<feature type="transmembrane region" description="Helical" evidence="2">
    <location>
        <begin position="327"/>
        <end position="347"/>
    </location>
</feature>
<feature type="transmembrane region" description="Helical" evidence="2">
    <location>
        <begin position="354"/>
        <end position="374"/>
    </location>
</feature>
<feature type="transmembrane region" description="Helical" evidence="2">
    <location>
        <begin position="396"/>
        <end position="416"/>
    </location>
</feature>
<feature type="transmembrane region" description="Helical" evidence="2">
    <location>
        <begin position="425"/>
        <end position="445"/>
    </location>
</feature>
<feature type="transmembrane region" description="Helical" evidence="2">
    <location>
        <begin position="543"/>
        <end position="563"/>
    </location>
</feature>
<feature type="transmembrane region" description="Helical" evidence="2">
    <location>
        <begin position="602"/>
        <end position="622"/>
    </location>
</feature>
<feature type="transmembrane region" description="Helical" evidence="2">
    <location>
        <begin position="717"/>
        <end position="737"/>
    </location>
</feature>
<sequence>MEQTYEYAWIIPFIPLPVPMLIGAGLILFPTATKSFRRMWAFQSVLLLSIVMIFSIYLSIQQINSSSVYQYVWSWIINNDFSLDFGYLIDPLTSIMSILITTVGIMVLIYSDNYMAHDQGYLRFFAYMSFFSTSMLGLVTSSNLIQIYIFWELVGLCSYLLIGFWFTRPVAANACQKAFVTNRVGDFGLLLGILGFYWITGSFEFRDLFEIFNNLIYNNEVNFLFVTLCAVLLFAGAVSKSAQFPLHVWLPDAMEGPTPISALIHAATMVAAGIFLVARLLPLFRVIPYIMYLISVIGIITVLLGATLALAQKDIKRGLAYSTMSQLGYMMLALGMGSYRSALFHLITHAYSKALLFLGSGSIIHSMETIVGYSPAKSQNMGLMGGLRKHVPITKITFLLGTLSLCGIPPLACFWSKDEILNDSWLYSPIFAIIAWATAGLTAFYMFRIYLLTFEGHLNVHFQNYGGKHKTPFYSISLWGKNGVKKNSCLLTMNNNESTYFLSKTKYPIDKNGRKMTRPFMTIAHFEHKAVSSYPYESDNTMLFPIFVLGLFTLFVGAIGIPFNQEGVNLDILSKWLAPSINLLHPKSNNSQDWNEFLKDAVVSVSIAYFGIFIASFLYKPVYSSLKNLEFINSFVKKGPKRILWDKIINGIYDWSYNRAYIDAFYTRFFVGGIRGLAEFTHFFDRRVIDGMTNGVGVISFIVGEGIKYIGGGRISSYLFLYLAYVSVFLLVYYLLFSTF</sequence>
<accession>Q2MIE0</accession>
<organism>
    <name type="scientific">Solanum bulbocastanum</name>
    <name type="common">Wild potato</name>
    <dbReference type="NCBI Taxonomy" id="147425"/>
    <lineage>
        <taxon>Eukaryota</taxon>
        <taxon>Viridiplantae</taxon>
        <taxon>Streptophyta</taxon>
        <taxon>Embryophyta</taxon>
        <taxon>Tracheophyta</taxon>
        <taxon>Spermatophyta</taxon>
        <taxon>Magnoliopsida</taxon>
        <taxon>eudicotyledons</taxon>
        <taxon>Gunneridae</taxon>
        <taxon>Pentapetalae</taxon>
        <taxon>asterids</taxon>
        <taxon>lamiids</taxon>
        <taxon>Solanales</taxon>
        <taxon>Solanaceae</taxon>
        <taxon>Solanoideae</taxon>
        <taxon>Solaneae</taxon>
        <taxon>Solanum</taxon>
    </lineage>
</organism>
<name>NU5C_SOLBU</name>